<accession>Q6MSM9</accession>
<name>RS19_MYCMS</name>
<keyword id="KW-1185">Reference proteome</keyword>
<keyword id="KW-0687">Ribonucleoprotein</keyword>
<keyword id="KW-0689">Ribosomal protein</keyword>
<keyword id="KW-0694">RNA-binding</keyword>
<keyword id="KW-0699">rRNA-binding</keyword>
<comment type="function">
    <text evidence="1">Protein S19 forms a complex with S13 that binds strongly to the 16S ribosomal RNA.</text>
</comment>
<comment type="similarity">
    <text evidence="1">Belongs to the universal ribosomal protein uS19 family.</text>
</comment>
<gene>
    <name evidence="1" type="primary">rpsS</name>
    <name type="ordered locus">MSC_0741</name>
</gene>
<evidence type="ECO:0000255" key="1">
    <source>
        <dbReference type="HAMAP-Rule" id="MF_00531"/>
    </source>
</evidence>
<evidence type="ECO:0000305" key="2"/>
<dbReference type="EMBL" id="BX293980">
    <property type="protein sequence ID" value="CAE77359.1"/>
    <property type="molecule type" value="Genomic_DNA"/>
</dbReference>
<dbReference type="RefSeq" id="NP_975717.1">
    <property type="nucleotide sequence ID" value="NC_005364.2"/>
</dbReference>
<dbReference type="RefSeq" id="WP_011166909.1">
    <property type="nucleotide sequence ID" value="NC_005364.2"/>
</dbReference>
<dbReference type="SMR" id="Q6MSM9"/>
<dbReference type="STRING" id="272632.MSC_0741"/>
<dbReference type="GeneID" id="93426137"/>
<dbReference type="KEGG" id="mmy:MSC_0741"/>
<dbReference type="PATRIC" id="fig|272632.4.peg.798"/>
<dbReference type="eggNOG" id="COG0185">
    <property type="taxonomic scope" value="Bacteria"/>
</dbReference>
<dbReference type="HOGENOM" id="CLU_144911_0_1_14"/>
<dbReference type="Proteomes" id="UP000001016">
    <property type="component" value="Chromosome"/>
</dbReference>
<dbReference type="GO" id="GO:0005737">
    <property type="term" value="C:cytoplasm"/>
    <property type="evidence" value="ECO:0007669"/>
    <property type="project" value="UniProtKB-ARBA"/>
</dbReference>
<dbReference type="GO" id="GO:0015935">
    <property type="term" value="C:small ribosomal subunit"/>
    <property type="evidence" value="ECO:0007669"/>
    <property type="project" value="InterPro"/>
</dbReference>
<dbReference type="GO" id="GO:0019843">
    <property type="term" value="F:rRNA binding"/>
    <property type="evidence" value="ECO:0007669"/>
    <property type="project" value="UniProtKB-UniRule"/>
</dbReference>
<dbReference type="GO" id="GO:0003735">
    <property type="term" value="F:structural constituent of ribosome"/>
    <property type="evidence" value="ECO:0007669"/>
    <property type="project" value="InterPro"/>
</dbReference>
<dbReference type="GO" id="GO:0000028">
    <property type="term" value="P:ribosomal small subunit assembly"/>
    <property type="evidence" value="ECO:0007669"/>
    <property type="project" value="TreeGrafter"/>
</dbReference>
<dbReference type="GO" id="GO:0006412">
    <property type="term" value="P:translation"/>
    <property type="evidence" value="ECO:0007669"/>
    <property type="project" value="UniProtKB-UniRule"/>
</dbReference>
<dbReference type="FunFam" id="3.30.860.10:FF:000001">
    <property type="entry name" value="30S ribosomal protein S19"/>
    <property type="match status" value="1"/>
</dbReference>
<dbReference type="Gene3D" id="3.30.860.10">
    <property type="entry name" value="30s Ribosomal Protein S19, Chain A"/>
    <property type="match status" value="1"/>
</dbReference>
<dbReference type="HAMAP" id="MF_00531">
    <property type="entry name" value="Ribosomal_uS19"/>
    <property type="match status" value="1"/>
</dbReference>
<dbReference type="InterPro" id="IPR002222">
    <property type="entry name" value="Ribosomal_uS19"/>
</dbReference>
<dbReference type="InterPro" id="IPR005732">
    <property type="entry name" value="Ribosomal_uS19_bac-type"/>
</dbReference>
<dbReference type="InterPro" id="IPR020934">
    <property type="entry name" value="Ribosomal_uS19_CS"/>
</dbReference>
<dbReference type="InterPro" id="IPR023575">
    <property type="entry name" value="Ribosomal_uS19_SF"/>
</dbReference>
<dbReference type="NCBIfam" id="TIGR01050">
    <property type="entry name" value="rpsS_bact"/>
    <property type="match status" value="1"/>
</dbReference>
<dbReference type="PANTHER" id="PTHR11880">
    <property type="entry name" value="RIBOSOMAL PROTEIN S19P FAMILY MEMBER"/>
    <property type="match status" value="1"/>
</dbReference>
<dbReference type="PANTHER" id="PTHR11880:SF8">
    <property type="entry name" value="SMALL RIBOSOMAL SUBUNIT PROTEIN US19M"/>
    <property type="match status" value="1"/>
</dbReference>
<dbReference type="Pfam" id="PF00203">
    <property type="entry name" value="Ribosomal_S19"/>
    <property type="match status" value="1"/>
</dbReference>
<dbReference type="PIRSF" id="PIRSF002144">
    <property type="entry name" value="Ribosomal_S19"/>
    <property type="match status" value="1"/>
</dbReference>
<dbReference type="PRINTS" id="PR00975">
    <property type="entry name" value="RIBOSOMALS19"/>
</dbReference>
<dbReference type="SUPFAM" id="SSF54570">
    <property type="entry name" value="Ribosomal protein S19"/>
    <property type="match status" value="1"/>
</dbReference>
<dbReference type="PROSITE" id="PS00323">
    <property type="entry name" value="RIBOSOMAL_S19"/>
    <property type="match status" value="1"/>
</dbReference>
<organism>
    <name type="scientific">Mycoplasma mycoides subsp. mycoides SC (strain CCUG 32753 / NCTC 10114 / PG1)</name>
    <dbReference type="NCBI Taxonomy" id="272632"/>
    <lineage>
        <taxon>Bacteria</taxon>
        <taxon>Bacillati</taxon>
        <taxon>Mycoplasmatota</taxon>
        <taxon>Mollicutes</taxon>
        <taxon>Mycoplasmataceae</taxon>
        <taxon>Mycoplasma</taxon>
    </lineage>
</organism>
<protein>
    <recommendedName>
        <fullName evidence="1">Small ribosomal subunit protein uS19</fullName>
    </recommendedName>
    <alternativeName>
        <fullName evidence="2">30S ribosomal protein S19</fullName>
    </alternativeName>
</protein>
<feature type="chain" id="PRO_0000129854" description="Small ribosomal subunit protein uS19">
    <location>
        <begin position="1"/>
        <end position="88"/>
    </location>
</feature>
<reference key="1">
    <citation type="journal article" date="2004" name="Genome Res.">
        <title>The genome sequence of Mycoplasma mycoides subsp. mycoides SC type strain PG1T, the causative agent of contagious bovine pleuropneumonia (CBPP).</title>
        <authorList>
            <person name="Westberg J."/>
            <person name="Persson A."/>
            <person name="Holmberg A."/>
            <person name="Goesmann A."/>
            <person name="Lundeberg J."/>
            <person name="Johansson K.-E."/>
            <person name="Pettersson B."/>
            <person name="Uhlen M."/>
        </authorList>
    </citation>
    <scope>NUCLEOTIDE SEQUENCE [LARGE SCALE GENOMIC DNA]</scope>
    <source>
        <strain>CCUG 32753 / NCTC 10114 / PG1</strain>
    </source>
</reference>
<proteinExistence type="inferred from homology"/>
<sequence>MARSLKKGPFVDESLFKKVTAAKDGEVIKTWSRRSTIFPEFIGKTFGVYNGKEFIPVYITEDMVGNKLGEFAPTRKFGGHGDDKGKKK</sequence>